<feature type="chain" id="PRO_1000012700" description="ATP-dependent protease ATPase subunit ClpY">
    <location>
        <begin position="1"/>
        <end position="467"/>
    </location>
</feature>
<feature type="binding site" evidence="1">
    <location>
        <position position="20"/>
    </location>
    <ligand>
        <name>ATP</name>
        <dbReference type="ChEBI" id="CHEBI:30616"/>
    </ligand>
</feature>
<feature type="binding site" evidence="1">
    <location>
        <begin position="62"/>
        <end position="67"/>
    </location>
    <ligand>
        <name>ATP</name>
        <dbReference type="ChEBI" id="CHEBI:30616"/>
    </ligand>
</feature>
<feature type="binding site" evidence="1">
    <location>
        <position position="279"/>
    </location>
    <ligand>
        <name>ATP</name>
        <dbReference type="ChEBI" id="CHEBI:30616"/>
    </ligand>
</feature>
<feature type="binding site" evidence="1">
    <location>
        <position position="345"/>
    </location>
    <ligand>
        <name>ATP</name>
        <dbReference type="ChEBI" id="CHEBI:30616"/>
    </ligand>
</feature>
<feature type="binding site" evidence="1">
    <location>
        <position position="417"/>
    </location>
    <ligand>
        <name>ATP</name>
        <dbReference type="ChEBI" id="CHEBI:30616"/>
    </ligand>
</feature>
<protein>
    <recommendedName>
        <fullName>ATP-dependent protease ATPase subunit ClpY</fullName>
    </recommendedName>
</protein>
<dbReference type="EMBL" id="CP000560">
    <property type="protein sequence ID" value="ABS73962.1"/>
    <property type="molecule type" value="Genomic_DNA"/>
</dbReference>
<dbReference type="RefSeq" id="WP_007409775.1">
    <property type="nucleotide sequence ID" value="NC_009725.2"/>
</dbReference>
<dbReference type="SMR" id="A7Z4N6"/>
<dbReference type="GeneID" id="93080732"/>
<dbReference type="KEGG" id="bay:RBAM_015990"/>
<dbReference type="HOGENOM" id="CLU_033123_0_0_9"/>
<dbReference type="Proteomes" id="UP000001120">
    <property type="component" value="Chromosome"/>
</dbReference>
<dbReference type="GO" id="GO:0009376">
    <property type="term" value="C:HslUV protease complex"/>
    <property type="evidence" value="ECO:0007669"/>
    <property type="project" value="UniProtKB-UniRule"/>
</dbReference>
<dbReference type="GO" id="GO:0005524">
    <property type="term" value="F:ATP binding"/>
    <property type="evidence" value="ECO:0007669"/>
    <property type="project" value="UniProtKB-UniRule"/>
</dbReference>
<dbReference type="GO" id="GO:0016887">
    <property type="term" value="F:ATP hydrolysis activity"/>
    <property type="evidence" value="ECO:0007669"/>
    <property type="project" value="InterPro"/>
</dbReference>
<dbReference type="GO" id="GO:0008233">
    <property type="term" value="F:peptidase activity"/>
    <property type="evidence" value="ECO:0007669"/>
    <property type="project" value="InterPro"/>
</dbReference>
<dbReference type="GO" id="GO:0036402">
    <property type="term" value="F:proteasome-activating activity"/>
    <property type="evidence" value="ECO:0007669"/>
    <property type="project" value="UniProtKB-UniRule"/>
</dbReference>
<dbReference type="GO" id="GO:0043335">
    <property type="term" value="P:protein unfolding"/>
    <property type="evidence" value="ECO:0007669"/>
    <property type="project" value="UniProtKB-UniRule"/>
</dbReference>
<dbReference type="GO" id="GO:0051603">
    <property type="term" value="P:proteolysis involved in protein catabolic process"/>
    <property type="evidence" value="ECO:0007669"/>
    <property type="project" value="TreeGrafter"/>
</dbReference>
<dbReference type="CDD" id="cd19498">
    <property type="entry name" value="RecA-like_HslU"/>
    <property type="match status" value="1"/>
</dbReference>
<dbReference type="FunFam" id="3.40.50.300:FF:000213">
    <property type="entry name" value="ATP-dependent protease ATPase subunit HslU"/>
    <property type="match status" value="1"/>
</dbReference>
<dbReference type="FunFam" id="3.40.50.300:FF:000220">
    <property type="entry name" value="ATP-dependent protease ATPase subunit HslU"/>
    <property type="match status" value="1"/>
</dbReference>
<dbReference type="Gene3D" id="1.10.8.60">
    <property type="match status" value="1"/>
</dbReference>
<dbReference type="Gene3D" id="3.40.50.300">
    <property type="entry name" value="P-loop containing nucleotide triphosphate hydrolases"/>
    <property type="match status" value="2"/>
</dbReference>
<dbReference type="HAMAP" id="MF_00249">
    <property type="entry name" value="HslU"/>
    <property type="match status" value="1"/>
</dbReference>
<dbReference type="InterPro" id="IPR003593">
    <property type="entry name" value="AAA+_ATPase"/>
</dbReference>
<dbReference type="InterPro" id="IPR050052">
    <property type="entry name" value="ATP-dep_Clp_protease_ClpX"/>
</dbReference>
<dbReference type="InterPro" id="IPR003959">
    <property type="entry name" value="ATPase_AAA_core"/>
</dbReference>
<dbReference type="InterPro" id="IPR019489">
    <property type="entry name" value="Clp_ATPase_C"/>
</dbReference>
<dbReference type="InterPro" id="IPR004491">
    <property type="entry name" value="HslU"/>
</dbReference>
<dbReference type="InterPro" id="IPR027417">
    <property type="entry name" value="P-loop_NTPase"/>
</dbReference>
<dbReference type="NCBIfam" id="TIGR00390">
    <property type="entry name" value="hslU"/>
    <property type="match status" value="1"/>
</dbReference>
<dbReference type="NCBIfam" id="NF003544">
    <property type="entry name" value="PRK05201.1"/>
    <property type="match status" value="1"/>
</dbReference>
<dbReference type="PANTHER" id="PTHR48102">
    <property type="entry name" value="ATP-DEPENDENT CLP PROTEASE ATP-BINDING SUBUNIT CLPX-LIKE, MITOCHONDRIAL-RELATED"/>
    <property type="match status" value="1"/>
</dbReference>
<dbReference type="PANTHER" id="PTHR48102:SF3">
    <property type="entry name" value="ATP-DEPENDENT PROTEASE ATPASE SUBUNIT HSLU"/>
    <property type="match status" value="1"/>
</dbReference>
<dbReference type="Pfam" id="PF00004">
    <property type="entry name" value="AAA"/>
    <property type="match status" value="1"/>
</dbReference>
<dbReference type="Pfam" id="PF07724">
    <property type="entry name" value="AAA_2"/>
    <property type="match status" value="1"/>
</dbReference>
<dbReference type="Pfam" id="PF10431">
    <property type="entry name" value="ClpB_D2-small"/>
    <property type="match status" value="1"/>
</dbReference>
<dbReference type="SMART" id="SM00382">
    <property type="entry name" value="AAA"/>
    <property type="match status" value="1"/>
</dbReference>
<dbReference type="SMART" id="SM01086">
    <property type="entry name" value="ClpB_D2-small"/>
    <property type="match status" value="1"/>
</dbReference>
<dbReference type="SUPFAM" id="SSF52540">
    <property type="entry name" value="P-loop containing nucleoside triphosphate hydrolases"/>
    <property type="match status" value="1"/>
</dbReference>
<gene>
    <name type="primary">clpY</name>
    <name type="synonym">hslU</name>
    <name type="ordered locus">RBAM_015990</name>
</gene>
<comment type="function">
    <text evidence="1">ATPase subunit of a proteasome-like degradation complex; this subunit has chaperone activity.</text>
</comment>
<comment type="subunit">
    <text evidence="1">A double ring-shaped homohexamer of ClpQ is capped on each side by a ring-shaped ClpY homohexamer. The assembly of the ClpQ/ClpY complex is dependent on binding of ATP (By similarity).</text>
</comment>
<comment type="subcellular location">
    <subcellularLocation>
        <location evidence="1">Cytoplasm</location>
    </subcellularLocation>
</comment>
<comment type="similarity">
    <text evidence="2">Belongs to the ClpX chaperone family. HslU subfamily.</text>
</comment>
<organism>
    <name type="scientific">Bacillus velezensis (strain DSM 23117 / BGSC 10A6 / LMG 26770 / FZB42)</name>
    <name type="common">Bacillus amyloliquefaciens subsp. plantarum</name>
    <dbReference type="NCBI Taxonomy" id="326423"/>
    <lineage>
        <taxon>Bacteria</taxon>
        <taxon>Bacillati</taxon>
        <taxon>Bacillota</taxon>
        <taxon>Bacilli</taxon>
        <taxon>Bacillales</taxon>
        <taxon>Bacillaceae</taxon>
        <taxon>Bacillus</taxon>
        <taxon>Bacillus amyloliquefaciens group</taxon>
    </lineage>
</organism>
<keyword id="KW-0067">ATP-binding</keyword>
<keyword id="KW-0143">Chaperone</keyword>
<keyword id="KW-0963">Cytoplasm</keyword>
<keyword id="KW-0547">Nucleotide-binding</keyword>
<sequence>MENKPLTPRQIVDRLDQYIVGQQDAKKAVAVALRNRYRRSLLDEKLRDEIVPKNILMMGPTGVGKTEIARRIAKLTGAPFIKIEATKFTEVGYVGRDVESMVRDLVETSVRLIKEEKISEVKEQAEENANKRIVRLLVPGKKKQAGVKNPFEMLFGGNQAANDDEADQQEEASLEEKRKRMAHQLALGELEDHYVSVEVEEQQPSMFDMLQGSGMEQMGMNMQDALSNLVPKKKKRRKMTVREARKVLTNEEAGKLIDMDEVGQEAVLRAEEGGIIFIDEIDKIAKNGGASSSADVSREGVQRDILPIVEGSTVVTKYGSVKTDHVLFIAAGAFHMAKPSDLIPELQGRFPIRVELSKLTVDDFVKILVEPDNALLKQYQALLQTEGISLEFSDEAIRKIAEVAYHVNQDTDNIGARRLHTILERLLEDLSFEAPDVTMEKVAITPQYVEEKLGTIANNKDLSQFIL</sequence>
<proteinExistence type="inferred from homology"/>
<name>CLPY_BACVZ</name>
<reference key="1">
    <citation type="journal article" date="2007" name="Nat. Biotechnol.">
        <title>Comparative analysis of the complete genome sequence of the plant growth-promoting bacterium Bacillus amyloliquefaciens FZB42.</title>
        <authorList>
            <person name="Chen X.H."/>
            <person name="Koumoutsi A."/>
            <person name="Scholz R."/>
            <person name="Eisenreich A."/>
            <person name="Schneider K."/>
            <person name="Heinemeyer I."/>
            <person name="Morgenstern B."/>
            <person name="Voss B."/>
            <person name="Hess W.R."/>
            <person name="Reva O."/>
            <person name="Junge H."/>
            <person name="Voigt B."/>
            <person name="Jungblut P.R."/>
            <person name="Vater J."/>
            <person name="Suessmuth R."/>
            <person name="Liesegang H."/>
            <person name="Strittmatter A."/>
            <person name="Gottschalk G."/>
            <person name="Borriss R."/>
        </authorList>
    </citation>
    <scope>NUCLEOTIDE SEQUENCE [LARGE SCALE GENOMIC DNA]</scope>
    <source>
        <strain>DSM 23117 / BGSC 10A6 / LMG 26770 / FZB42</strain>
    </source>
</reference>
<accession>A7Z4N6</accession>
<evidence type="ECO:0000250" key="1"/>
<evidence type="ECO:0000305" key="2"/>